<accession>C1KW53</accession>
<proteinExistence type="inferred from homology"/>
<name>GATB_LISMC</name>
<dbReference type="EC" id="6.3.5.-" evidence="1"/>
<dbReference type="EMBL" id="FM242711">
    <property type="protein sequence ID" value="CAS05528.1"/>
    <property type="molecule type" value="Genomic_DNA"/>
</dbReference>
<dbReference type="RefSeq" id="WP_003731563.1">
    <property type="nucleotide sequence ID" value="NC_012488.1"/>
</dbReference>
<dbReference type="SMR" id="C1KW53"/>
<dbReference type="KEGG" id="lmc:Lm4b_01768"/>
<dbReference type="HOGENOM" id="CLU_019240_0_0_9"/>
<dbReference type="GO" id="GO:0050566">
    <property type="term" value="F:asparaginyl-tRNA synthase (glutamine-hydrolyzing) activity"/>
    <property type="evidence" value="ECO:0007669"/>
    <property type="project" value="RHEA"/>
</dbReference>
<dbReference type="GO" id="GO:0005524">
    <property type="term" value="F:ATP binding"/>
    <property type="evidence" value="ECO:0007669"/>
    <property type="project" value="UniProtKB-KW"/>
</dbReference>
<dbReference type="GO" id="GO:0050567">
    <property type="term" value="F:glutaminyl-tRNA synthase (glutamine-hydrolyzing) activity"/>
    <property type="evidence" value="ECO:0007669"/>
    <property type="project" value="UniProtKB-UniRule"/>
</dbReference>
<dbReference type="GO" id="GO:0070681">
    <property type="term" value="P:glutaminyl-tRNAGln biosynthesis via transamidation"/>
    <property type="evidence" value="ECO:0007669"/>
    <property type="project" value="TreeGrafter"/>
</dbReference>
<dbReference type="GO" id="GO:0006412">
    <property type="term" value="P:translation"/>
    <property type="evidence" value="ECO:0007669"/>
    <property type="project" value="UniProtKB-UniRule"/>
</dbReference>
<dbReference type="FunFam" id="1.10.10.410:FF:000001">
    <property type="entry name" value="Aspartyl/glutamyl-tRNA(Asn/Gln) amidotransferase subunit B"/>
    <property type="match status" value="1"/>
</dbReference>
<dbReference type="FunFam" id="1.10.150.380:FF:000001">
    <property type="entry name" value="Aspartyl/glutamyl-tRNA(Asn/Gln) amidotransferase subunit B"/>
    <property type="match status" value="1"/>
</dbReference>
<dbReference type="Gene3D" id="1.10.10.410">
    <property type="match status" value="1"/>
</dbReference>
<dbReference type="Gene3D" id="1.10.150.380">
    <property type="entry name" value="GatB domain, N-terminal subdomain"/>
    <property type="match status" value="1"/>
</dbReference>
<dbReference type="HAMAP" id="MF_00121">
    <property type="entry name" value="GatB"/>
    <property type="match status" value="1"/>
</dbReference>
<dbReference type="InterPro" id="IPR017959">
    <property type="entry name" value="Asn/Gln-tRNA_amidoTrfase_suB/E"/>
</dbReference>
<dbReference type="InterPro" id="IPR006075">
    <property type="entry name" value="Asn/Gln-tRNA_Trfase_suB/E_cat"/>
</dbReference>
<dbReference type="InterPro" id="IPR018027">
    <property type="entry name" value="Asn/Gln_amidotransferase"/>
</dbReference>
<dbReference type="InterPro" id="IPR003789">
    <property type="entry name" value="Asn/Gln_tRNA_amidoTrase-B-like"/>
</dbReference>
<dbReference type="InterPro" id="IPR004413">
    <property type="entry name" value="GatB"/>
</dbReference>
<dbReference type="InterPro" id="IPR042114">
    <property type="entry name" value="GatB_C_1"/>
</dbReference>
<dbReference type="InterPro" id="IPR023168">
    <property type="entry name" value="GatB_Yqey_C_2"/>
</dbReference>
<dbReference type="InterPro" id="IPR017958">
    <property type="entry name" value="Gln-tRNA_amidoTrfase_suB_CS"/>
</dbReference>
<dbReference type="InterPro" id="IPR014746">
    <property type="entry name" value="Gln_synth/guanido_kin_cat_dom"/>
</dbReference>
<dbReference type="NCBIfam" id="TIGR00133">
    <property type="entry name" value="gatB"/>
    <property type="match status" value="1"/>
</dbReference>
<dbReference type="NCBIfam" id="NF004011">
    <property type="entry name" value="PRK05477.1-1"/>
    <property type="match status" value="1"/>
</dbReference>
<dbReference type="NCBIfam" id="NF004012">
    <property type="entry name" value="PRK05477.1-2"/>
    <property type="match status" value="1"/>
</dbReference>
<dbReference type="NCBIfam" id="NF004014">
    <property type="entry name" value="PRK05477.1-4"/>
    <property type="match status" value="1"/>
</dbReference>
<dbReference type="PANTHER" id="PTHR11659">
    <property type="entry name" value="GLUTAMYL-TRNA GLN AMIDOTRANSFERASE SUBUNIT B MITOCHONDRIAL AND PROKARYOTIC PET112-RELATED"/>
    <property type="match status" value="1"/>
</dbReference>
<dbReference type="PANTHER" id="PTHR11659:SF0">
    <property type="entry name" value="GLUTAMYL-TRNA(GLN) AMIDOTRANSFERASE SUBUNIT B, MITOCHONDRIAL"/>
    <property type="match status" value="1"/>
</dbReference>
<dbReference type="Pfam" id="PF02934">
    <property type="entry name" value="GatB_N"/>
    <property type="match status" value="1"/>
</dbReference>
<dbReference type="Pfam" id="PF02637">
    <property type="entry name" value="GatB_Yqey"/>
    <property type="match status" value="1"/>
</dbReference>
<dbReference type="SMART" id="SM00845">
    <property type="entry name" value="GatB_Yqey"/>
    <property type="match status" value="1"/>
</dbReference>
<dbReference type="SUPFAM" id="SSF89095">
    <property type="entry name" value="GatB/YqeY motif"/>
    <property type="match status" value="1"/>
</dbReference>
<dbReference type="SUPFAM" id="SSF55931">
    <property type="entry name" value="Glutamine synthetase/guanido kinase"/>
    <property type="match status" value="1"/>
</dbReference>
<dbReference type="PROSITE" id="PS01234">
    <property type="entry name" value="GATB"/>
    <property type="match status" value="1"/>
</dbReference>
<keyword id="KW-0067">ATP-binding</keyword>
<keyword id="KW-0436">Ligase</keyword>
<keyword id="KW-0547">Nucleotide-binding</keyword>
<keyword id="KW-0648">Protein biosynthesis</keyword>
<sequence>MNFETVIGLEVHVELKTNSKIFSSAPAHFGAEPNTNTTVVDLGMPGVLPVLNKRAVEFGMKAAMAINCEIAKHTKFDRKNYFYPDNPKAYQISQFDKPIGEHGWIEIEVGGKKKKIGITRLHLEEDAGKNTHTSHGYSLVDINRQGTPLIEIVSEPDIRSAEEAYAYLEKLKSIIQYTGVSDVKMEEGSMRCDANISIRPIGQEEFGVKTELKNLNSFNNVRKGIEYEEKRQAEVLKSGGIIEQETRRFEEATGKTSLMRIKEGSDDYRYFPEPDLVDLFIDDAWKERIRAEIPELPDKRQIRYINDLGLPAYDAMVLTLTKEMSDFFEATLAAGADAKQASNWLMGEVSAYLNAEQKELHETGLTPENLAGMIKLIEAGTISSKIAKKVFRELAQNGGDAEQVVKDKGLVQISDEGALRTIISEILDNNEQSIVDFKNGKDRAVGFLVGQVMKATKGQANPPMVNKLLLEEMNKR</sequence>
<organism>
    <name type="scientific">Listeria monocytogenes serotype 4b (strain CLIP80459)</name>
    <dbReference type="NCBI Taxonomy" id="568819"/>
    <lineage>
        <taxon>Bacteria</taxon>
        <taxon>Bacillati</taxon>
        <taxon>Bacillota</taxon>
        <taxon>Bacilli</taxon>
        <taxon>Bacillales</taxon>
        <taxon>Listeriaceae</taxon>
        <taxon>Listeria</taxon>
    </lineage>
</organism>
<reference key="1">
    <citation type="journal article" date="2012" name="BMC Genomics">
        <title>Comparative genomics and transcriptomics of lineages I, II, and III strains of Listeria monocytogenes.</title>
        <authorList>
            <person name="Hain T."/>
            <person name="Ghai R."/>
            <person name="Billion A."/>
            <person name="Kuenne C.T."/>
            <person name="Steinweg C."/>
            <person name="Izar B."/>
            <person name="Mohamed W."/>
            <person name="Mraheil M."/>
            <person name="Domann E."/>
            <person name="Schaffrath S."/>
            <person name="Karst U."/>
            <person name="Goesmann A."/>
            <person name="Oehm S."/>
            <person name="Puhler A."/>
            <person name="Merkl R."/>
            <person name="Vorwerk S."/>
            <person name="Glaser P."/>
            <person name="Garrido P."/>
            <person name="Rusniok C."/>
            <person name="Buchrieser C."/>
            <person name="Goebel W."/>
            <person name="Chakraborty T."/>
        </authorList>
    </citation>
    <scope>NUCLEOTIDE SEQUENCE [LARGE SCALE GENOMIC DNA]</scope>
    <source>
        <strain>CLIP80459</strain>
    </source>
</reference>
<protein>
    <recommendedName>
        <fullName evidence="1">Aspartyl/glutamyl-tRNA(Asn/Gln) amidotransferase subunit B</fullName>
        <shortName evidence="1">Asp/Glu-ADT subunit B</shortName>
        <ecNumber evidence="1">6.3.5.-</ecNumber>
    </recommendedName>
</protein>
<gene>
    <name evidence="1" type="primary">gatB</name>
    <name type="ordered locus">Lm4b_01768</name>
</gene>
<feature type="chain" id="PRO_1000203055" description="Aspartyl/glutamyl-tRNA(Asn/Gln) amidotransferase subunit B">
    <location>
        <begin position="1"/>
        <end position="476"/>
    </location>
</feature>
<evidence type="ECO:0000255" key="1">
    <source>
        <dbReference type="HAMAP-Rule" id="MF_00121"/>
    </source>
</evidence>
<comment type="function">
    <text evidence="1">Allows the formation of correctly charged Asn-tRNA(Asn) or Gln-tRNA(Gln) through the transamidation of misacylated Asp-tRNA(Asn) or Glu-tRNA(Gln) in organisms which lack either or both of asparaginyl-tRNA or glutaminyl-tRNA synthetases. The reaction takes place in the presence of glutamine and ATP through an activated phospho-Asp-tRNA(Asn) or phospho-Glu-tRNA(Gln).</text>
</comment>
<comment type="catalytic activity">
    <reaction evidence="1">
        <text>L-glutamyl-tRNA(Gln) + L-glutamine + ATP + H2O = L-glutaminyl-tRNA(Gln) + L-glutamate + ADP + phosphate + H(+)</text>
        <dbReference type="Rhea" id="RHEA:17521"/>
        <dbReference type="Rhea" id="RHEA-COMP:9681"/>
        <dbReference type="Rhea" id="RHEA-COMP:9684"/>
        <dbReference type="ChEBI" id="CHEBI:15377"/>
        <dbReference type="ChEBI" id="CHEBI:15378"/>
        <dbReference type="ChEBI" id="CHEBI:29985"/>
        <dbReference type="ChEBI" id="CHEBI:30616"/>
        <dbReference type="ChEBI" id="CHEBI:43474"/>
        <dbReference type="ChEBI" id="CHEBI:58359"/>
        <dbReference type="ChEBI" id="CHEBI:78520"/>
        <dbReference type="ChEBI" id="CHEBI:78521"/>
        <dbReference type="ChEBI" id="CHEBI:456216"/>
    </reaction>
</comment>
<comment type="catalytic activity">
    <reaction evidence="1">
        <text>L-aspartyl-tRNA(Asn) + L-glutamine + ATP + H2O = L-asparaginyl-tRNA(Asn) + L-glutamate + ADP + phosphate + 2 H(+)</text>
        <dbReference type="Rhea" id="RHEA:14513"/>
        <dbReference type="Rhea" id="RHEA-COMP:9674"/>
        <dbReference type="Rhea" id="RHEA-COMP:9677"/>
        <dbReference type="ChEBI" id="CHEBI:15377"/>
        <dbReference type="ChEBI" id="CHEBI:15378"/>
        <dbReference type="ChEBI" id="CHEBI:29985"/>
        <dbReference type="ChEBI" id="CHEBI:30616"/>
        <dbReference type="ChEBI" id="CHEBI:43474"/>
        <dbReference type="ChEBI" id="CHEBI:58359"/>
        <dbReference type="ChEBI" id="CHEBI:78515"/>
        <dbReference type="ChEBI" id="CHEBI:78516"/>
        <dbReference type="ChEBI" id="CHEBI:456216"/>
    </reaction>
</comment>
<comment type="subunit">
    <text evidence="1">Heterotrimer of A, B and C subunits.</text>
</comment>
<comment type="similarity">
    <text evidence="1">Belongs to the GatB/GatE family. GatB subfamily.</text>
</comment>